<sequence length="31" mass="3316">GFNPCGETCIWFPTCHAPGCTCSIANICVRN</sequence>
<proteinExistence type="evidence at protein level"/>
<feature type="peptide" id="PRO_0000441782" description="Cyclotide psybry A" evidence="3">
    <location>
        <begin position="1"/>
        <end position="31"/>
    </location>
</feature>
<feature type="disulfide bond" evidence="2">
    <location>
        <begin position="5"/>
        <end position="20"/>
    </location>
</feature>
<feature type="disulfide bond" evidence="2">
    <location>
        <begin position="9"/>
        <end position="22"/>
    </location>
</feature>
<feature type="disulfide bond" evidence="1">
    <location>
        <begin position="15"/>
        <end position="28"/>
    </location>
</feature>
<feature type="cross-link" description="Cyclopeptide (Gly-Asn)" evidence="6">
    <location>
        <begin position="1"/>
        <end position="31"/>
    </location>
</feature>
<feature type="unsure residue" description="I or L" evidence="4">
    <location>
        <position position="10"/>
    </location>
</feature>
<feature type="unsure residue" description="I or L" evidence="4">
    <location>
        <position position="24"/>
    </location>
</feature>
<feature type="unsure residue" description="I or L" evidence="4">
    <location>
        <position position="27"/>
    </location>
</feature>
<dbReference type="SMR" id="C0HL20"/>
<dbReference type="GO" id="GO:0006952">
    <property type="term" value="P:defense response"/>
    <property type="evidence" value="ECO:0007669"/>
    <property type="project" value="UniProtKB-KW"/>
</dbReference>
<dbReference type="InterPro" id="IPR005535">
    <property type="entry name" value="Cyclotide"/>
</dbReference>
<dbReference type="InterPro" id="IPR036146">
    <property type="entry name" value="Cyclotide_sf"/>
</dbReference>
<dbReference type="Pfam" id="PF03784">
    <property type="entry name" value="Cyclotide"/>
    <property type="match status" value="1"/>
</dbReference>
<dbReference type="SUPFAM" id="SSF57038">
    <property type="entry name" value="Cyclotides"/>
    <property type="match status" value="1"/>
</dbReference>
<keyword id="KW-0903">Direct protein sequencing</keyword>
<keyword id="KW-1015">Disulfide bond</keyword>
<keyword id="KW-0960">Knottin</keyword>
<keyword id="KW-0611">Plant defense</keyword>
<comment type="function">
    <text evidence="2">Probably participates in a plant defense mechanism.</text>
</comment>
<comment type="domain">
    <text evidence="5">The presence of a 'disulfide through disulfide knot' structurally defines this protein as a knottin.</text>
</comment>
<comment type="PTM">
    <text evidence="2 3">This is a cyclic peptide.</text>
</comment>
<comment type="mass spectrometry" mass="3655.4" method="MALDI" evidence="3"/>
<comment type="similarity">
    <text evidence="2">Belongs to the cyclotide family.</text>
</comment>
<comment type="caution">
    <text evidence="2">This peptide is cyclic. The start position was chosen by similarity to Oak1 (kalata B1) for which the DNA sequence is known.</text>
</comment>
<evidence type="ECO:0000250" key="1">
    <source>
        <dbReference type="UniProtKB" id="P56254"/>
    </source>
</evidence>
<evidence type="ECO:0000255" key="2">
    <source>
        <dbReference type="PROSITE-ProRule" id="PRU00395"/>
    </source>
</evidence>
<evidence type="ECO:0000269" key="3">
    <source>
    </source>
</evidence>
<evidence type="ECO:0000303" key="4">
    <source>
    </source>
</evidence>
<evidence type="ECO:0000305" key="5"/>
<evidence type="ECO:0000305" key="6">
    <source>
    </source>
</evidence>
<reference evidence="5" key="1">
    <citation type="journal article" date="2016" name="J. Nat. Prod.">
        <title>Isolation and Characterization of Cyclotides from Brazilian Psychotria: Significance in Plant Defense and Co-occurrence with Antioxidant Alkaloids.</title>
        <authorList>
            <person name="Matsuura H.N."/>
            <person name="Poth A.G."/>
            <person name="Yendo A.C."/>
            <person name="Fett-Neto A.G."/>
            <person name="Craik D.J."/>
        </authorList>
    </citation>
    <scope>PROTEIN SEQUENCE</scope>
    <scope>MASS SPECTROMETRY</scope>
    <scope>IDENTIFICATION BY MASS SPECTROMETRY</scope>
    <scope>CYCLIZATION</scope>
    <source>
        <tissue evidence="4">Leaf</tissue>
    </source>
</reference>
<protein>
    <recommendedName>
        <fullName evidence="4">Cyclotide psybry A</fullName>
    </recommendedName>
</protein>
<accession>C0HL20</accession>
<organism>
    <name type="scientific">Psychotria brachyceras</name>
    <dbReference type="NCBI Taxonomy" id="980682"/>
    <lineage>
        <taxon>Eukaryota</taxon>
        <taxon>Viridiplantae</taxon>
        <taxon>Streptophyta</taxon>
        <taxon>Embryophyta</taxon>
        <taxon>Tracheophyta</taxon>
        <taxon>Spermatophyta</taxon>
        <taxon>Magnoliopsida</taxon>
        <taxon>eudicotyledons</taxon>
        <taxon>Gunneridae</taxon>
        <taxon>Pentapetalae</taxon>
        <taxon>asterids</taxon>
        <taxon>lamiids</taxon>
        <taxon>Gentianales</taxon>
        <taxon>Rubiaceae</taxon>
        <taxon>Rubioideae</taxon>
        <taxon>Psychotrieae</taxon>
        <taxon>Psychotria</taxon>
    </lineage>
</organism>
<name>CYPBA_PSYBR</name>